<organism>
    <name type="scientific">Streptomyces clavuligerus</name>
    <dbReference type="NCBI Taxonomy" id="1901"/>
    <lineage>
        <taxon>Bacteria</taxon>
        <taxon>Bacillati</taxon>
        <taxon>Actinomycetota</taxon>
        <taxon>Actinomycetes</taxon>
        <taxon>Kitasatosporales</taxon>
        <taxon>Streptomycetaceae</taxon>
        <taxon>Streptomyces</taxon>
    </lineage>
</organism>
<name>MASY_STRCL</name>
<evidence type="ECO:0000250" key="1"/>
<evidence type="ECO:0000305" key="2"/>
<feature type="chain" id="PRO_0000166878" description="Malate synthase">
    <location>
        <begin position="1"/>
        <end position="541"/>
    </location>
</feature>
<feature type="active site" description="Proton acceptor" evidence="1">
    <location>
        <position position="169"/>
    </location>
</feature>
<feature type="active site" description="Proton donor" evidence="1">
    <location>
        <position position="454"/>
    </location>
</feature>
<reference key="1">
    <citation type="journal article" date="1998" name="Microbiology">
        <title>Malate synthase from Streptomyces clavuligerus NRRL3585: cloning, molecular characterization and its control by acetate.</title>
        <authorList>
            <person name="Chan M."/>
            <person name="Sim T.S."/>
        </authorList>
    </citation>
    <scope>NUCLEOTIDE SEQUENCE [GENOMIC DNA]</scope>
    <source>
        <strain>ATCC 27064 / DSM 738 / JCM 4710 / NBRC 13307 / NCIMB 12785 / NRRL 3585 / VKM Ac-602</strain>
    </source>
</reference>
<gene>
    <name type="primary">aceB</name>
</gene>
<accession>Q9ZH77</accession>
<proteinExistence type="inferred from homology"/>
<protein>
    <recommendedName>
        <fullName>Malate synthase</fullName>
        <ecNumber>2.3.3.9</ecNumber>
    </recommendedName>
</protein>
<dbReference type="EC" id="2.3.3.9"/>
<dbReference type="EMBL" id="AF070989">
    <property type="protein sequence ID" value="AAC83648.1"/>
    <property type="molecule type" value="Genomic_DNA"/>
</dbReference>
<dbReference type="RefSeq" id="WP_003954464.1">
    <property type="nucleotide sequence ID" value="NZ_CM000913.1"/>
</dbReference>
<dbReference type="SMR" id="Q9ZH77"/>
<dbReference type="STRING" id="1901.BB341_03950"/>
<dbReference type="GeneID" id="93728565"/>
<dbReference type="eggNOG" id="COG2225">
    <property type="taxonomic scope" value="Bacteria"/>
</dbReference>
<dbReference type="OrthoDB" id="9768429at2"/>
<dbReference type="BRENDA" id="2.3.3.9">
    <property type="organism ID" value="5988"/>
</dbReference>
<dbReference type="UniPathway" id="UPA00703">
    <property type="reaction ID" value="UER00720"/>
</dbReference>
<dbReference type="GO" id="GO:0005737">
    <property type="term" value="C:cytoplasm"/>
    <property type="evidence" value="ECO:0007669"/>
    <property type="project" value="UniProtKB-SubCell"/>
</dbReference>
<dbReference type="GO" id="GO:0004474">
    <property type="term" value="F:malate synthase activity"/>
    <property type="evidence" value="ECO:0007669"/>
    <property type="project" value="UniProtKB-EC"/>
</dbReference>
<dbReference type="GO" id="GO:0006097">
    <property type="term" value="P:glyoxylate cycle"/>
    <property type="evidence" value="ECO:0007669"/>
    <property type="project" value="UniProtKB-UniPathway"/>
</dbReference>
<dbReference type="GO" id="GO:0006099">
    <property type="term" value="P:tricarboxylic acid cycle"/>
    <property type="evidence" value="ECO:0007669"/>
    <property type="project" value="UniProtKB-KW"/>
</dbReference>
<dbReference type="CDD" id="cd00727">
    <property type="entry name" value="malate_synt_A"/>
    <property type="match status" value="1"/>
</dbReference>
<dbReference type="FunFam" id="1.20.1220.12:FF:000001">
    <property type="entry name" value="Malate synthase"/>
    <property type="match status" value="1"/>
</dbReference>
<dbReference type="FunFam" id="3.20.20.360:FF:000001">
    <property type="entry name" value="Malate synthase"/>
    <property type="match status" value="1"/>
</dbReference>
<dbReference type="Gene3D" id="3.20.20.360">
    <property type="entry name" value="Malate synthase, domain 3"/>
    <property type="match status" value="1"/>
</dbReference>
<dbReference type="Gene3D" id="1.20.1220.12">
    <property type="entry name" value="Malate synthase, domain III"/>
    <property type="match status" value="1"/>
</dbReference>
<dbReference type="InterPro" id="IPR044856">
    <property type="entry name" value="Malate_synth_C_sf"/>
</dbReference>
<dbReference type="InterPro" id="IPR011076">
    <property type="entry name" value="Malate_synth_sf"/>
</dbReference>
<dbReference type="InterPro" id="IPR006252">
    <property type="entry name" value="Malate_synthA"/>
</dbReference>
<dbReference type="InterPro" id="IPR019830">
    <property type="entry name" value="Malate_synthase_CS"/>
</dbReference>
<dbReference type="InterPro" id="IPR001465">
    <property type="entry name" value="Malate_synthase_TIM"/>
</dbReference>
<dbReference type="InterPro" id="IPR048355">
    <property type="entry name" value="MS_C"/>
</dbReference>
<dbReference type="InterPro" id="IPR048356">
    <property type="entry name" value="MS_N"/>
</dbReference>
<dbReference type="InterPro" id="IPR046363">
    <property type="entry name" value="MS_N_TIM-barrel_dom"/>
</dbReference>
<dbReference type="NCBIfam" id="TIGR01344">
    <property type="entry name" value="malate_syn_A"/>
    <property type="match status" value="1"/>
</dbReference>
<dbReference type="PANTHER" id="PTHR42902">
    <property type="entry name" value="MALATE SYNTHASE"/>
    <property type="match status" value="1"/>
</dbReference>
<dbReference type="PANTHER" id="PTHR42902:SF1">
    <property type="entry name" value="MALATE SYNTHASE 1-RELATED"/>
    <property type="match status" value="1"/>
</dbReference>
<dbReference type="Pfam" id="PF20659">
    <property type="entry name" value="MS_C"/>
    <property type="match status" value="1"/>
</dbReference>
<dbReference type="Pfam" id="PF20656">
    <property type="entry name" value="MS_N"/>
    <property type="match status" value="1"/>
</dbReference>
<dbReference type="Pfam" id="PF01274">
    <property type="entry name" value="MS_TIM-barrel"/>
    <property type="match status" value="1"/>
</dbReference>
<dbReference type="PIRSF" id="PIRSF001363">
    <property type="entry name" value="Malate_synth"/>
    <property type="match status" value="1"/>
</dbReference>
<dbReference type="SUPFAM" id="SSF51645">
    <property type="entry name" value="Malate synthase G"/>
    <property type="match status" value="1"/>
</dbReference>
<dbReference type="PROSITE" id="PS00510">
    <property type="entry name" value="MALATE_SYNTHASE"/>
    <property type="match status" value="1"/>
</dbReference>
<comment type="catalytic activity">
    <reaction>
        <text>glyoxylate + acetyl-CoA + H2O = (S)-malate + CoA + H(+)</text>
        <dbReference type="Rhea" id="RHEA:18181"/>
        <dbReference type="ChEBI" id="CHEBI:15377"/>
        <dbReference type="ChEBI" id="CHEBI:15378"/>
        <dbReference type="ChEBI" id="CHEBI:15589"/>
        <dbReference type="ChEBI" id="CHEBI:36655"/>
        <dbReference type="ChEBI" id="CHEBI:57287"/>
        <dbReference type="ChEBI" id="CHEBI:57288"/>
        <dbReference type="EC" id="2.3.3.9"/>
    </reaction>
</comment>
<comment type="pathway">
    <text>Carbohydrate metabolism; glyoxylate cycle; (S)-malate from isocitrate: step 2/2.</text>
</comment>
<comment type="subcellular location">
    <subcellularLocation>
        <location evidence="1">Cytoplasm</location>
    </subcellularLocation>
</comment>
<comment type="similarity">
    <text evidence="2">Belongs to the malate synthase family.</text>
</comment>
<keyword id="KW-0963">Cytoplasm</keyword>
<keyword id="KW-0329">Glyoxylate bypass</keyword>
<keyword id="KW-0808">Transferase</keyword>
<keyword id="KW-0816">Tricarboxylic acid cycle</keyword>
<sequence>MSASAPSRPAVVTAPAVPRQDEVLTEAALVFLAELHRRFTPRRDELLARRARRRAEISRTGTLDFLPETAHVRADDSWRVAPAPPALQDRRVEITGPADRRMTVNALNSGARVWLADFEDSSAPTWENVISGQLALSDAYHRRIDFTDERSGKSYALRPDAELATVVMRPRGWHLPERHLTGPDGGVLPGALVDFGLCFFHTARRLLDLGKGPYFYLPKLESHQEARLWNDIFLFAQEQLGIPRGTIRATVLIETITAAYEMEEILYELREHASGLNAGRWDYLFSIIKNFRDAGPGFVLPDRNAITMTAPFMRAYTELLVRTCHRRGAHAIGGMAAFIPSRRDPEINRAAFEKVRADKDREAADGFDGSWVAHPDLVPVALASFDAVLGDRPHQKDRLREEVSVTAAELIAVGSPAARPTAAGLLNAVRVGIRYIEAWLRGTGAVAIFHLMEDAATAEISRSQIWQWINAGVVLENGERVTPALVRTLAAGELGALRETLGGEEYAAGRWQEAHDLLLRVALDEEYADFLTLPAYERLTG</sequence>